<accession>O45291</accession>
<organism>
    <name type="scientific">Caenorhabditis elegans</name>
    <dbReference type="NCBI Taxonomy" id="6239"/>
    <lineage>
        <taxon>Eukaryota</taxon>
        <taxon>Metazoa</taxon>
        <taxon>Ecdysozoa</taxon>
        <taxon>Nematoda</taxon>
        <taxon>Chromadorea</taxon>
        <taxon>Rhabditida</taxon>
        <taxon>Rhabditina</taxon>
        <taxon>Rhabditomorpha</taxon>
        <taxon>Rhabditoidea</taxon>
        <taxon>Rhabditidae</taxon>
        <taxon>Peloderinae</taxon>
        <taxon>Caenorhabditis</taxon>
    </lineage>
</organism>
<sequence>MNYQNEQNAYQMQNQENVPPMSYGYPMPTPEQFQKMSYGQNFQAPWDMQQQIQMFQQYHQNFQGGYSDPFTYQNQYAHQPKIVTVTLQDPQDLWKELHYLSNEQNVLNNGRKIFPALNYKVEHLNPESNYKVEILLRRMVPYQIQYSNGSWSRKNVQSKKTIAMKTEKVFVGEFTGQDIMRTGLDLSDVKVFNIGSDNKKKVTPYEEMSDAEKREYDTQYSKKKTSMLEVSNECKYIPVLIINEILPNQELRLVGEFENEITQFATVSSYKNHIVKALRTAANPTSRGDAKQEAVQVGKQWRSSNKSLLESLRPSMICTSVSTTAPSTNFHAPLQYPGTSSPSSNFAPMTPSTSFDSAYSSFNVTSSTPEQMCYNPIPSMSTDYSFCSFDSATSSPPLQPTATSPEASQNQIKLEMNQYM</sequence>
<reference key="1">
    <citation type="journal article" date="1998" name="Science">
        <title>Genome sequence of the nematode C. elegans: a platform for investigating biology.</title>
        <authorList>
            <consortium name="The C. elegans sequencing consortium"/>
        </authorList>
    </citation>
    <scope>NUCLEOTIDE SEQUENCE [LARGE SCALE GENOMIC DNA]</scope>
    <source>
        <strain>Bristol N2</strain>
    </source>
</reference>
<gene>
    <name type="primary">tbx-33</name>
    <name type="ORF">Y66A7A.8</name>
</gene>
<evidence type="ECO:0000255" key="1">
    <source>
        <dbReference type="PROSITE-ProRule" id="PRU00201"/>
    </source>
</evidence>
<evidence type="ECO:0000256" key="2">
    <source>
        <dbReference type="SAM" id="MobiDB-lite"/>
    </source>
</evidence>
<proteinExistence type="inferred from homology"/>
<keyword id="KW-0238">DNA-binding</keyword>
<keyword id="KW-0539">Nucleus</keyword>
<keyword id="KW-1185">Reference proteome</keyword>
<keyword id="KW-0804">Transcription</keyword>
<keyword id="KW-0805">Transcription regulation</keyword>
<dbReference type="EMBL" id="AL590342">
    <property type="protein sequence ID" value="CAC35862.2"/>
    <property type="molecule type" value="Genomic_DNA"/>
</dbReference>
<dbReference type="EMBL" id="AL032627">
    <property type="protein sequence ID" value="CAC35862.2"/>
    <property type="status" value="JOINED"/>
    <property type="molecule type" value="Genomic_DNA"/>
</dbReference>
<dbReference type="PIR" id="T26809">
    <property type="entry name" value="T26809"/>
</dbReference>
<dbReference type="RefSeq" id="NP_499506.2">
    <property type="nucleotide sequence ID" value="NM_067105.6"/>
</dbReference>
<dbReference type="SMR" id="O45291"/>
<dbReference type="BioGRID" id="55077">
    <property type="interactions" value="4"/>
</dbReference>
<dbReference type="FunCoup" id="O45291">
    <property type="interactions" value="67"/>
</dbReference>
<dbReference type="IntAct" id="O45291">
    <property type="interactions" value="4"/>
</dbReference>
<dbReference type="STRING" id="6239.Y66A7A.8.1"/>
<dbReference type="PaxDb" id="6239-Y66A7A.8"/>
<dbReference type="EnsemblMetazoa" id="Y66A7A.8.1">
    <property type="protein sequence ID" value="Y66A7A.8.1"/>
    <property type="gene ID" value="WBGene00006552"/>
</dbReference>
<dbReference type="GeneID" id="190493"/>
<dbReference type="KEGG" id="cel:CELE_Y66A7A.8"/>
<dbReference type="UCSC" id="Y66A7A.8">
    <property type="organism name" value="c. elegans"/>
</dbReference>
<dbReference type="AGR" id="WB:WBGene00006552"/>
<dbReference type="CTD" id="190493"/>
<dbReference type="WormBase" id="Y66A7A.8">
    <property type="protein sequence ID" value="CE43263"/>
    <property type="gene ID" value="WBGene00006552"/>
    <property type="gene designation" value="tbx-33"/>
</dbReference>
<dbReference type="eggNOG" id="KOG3585">
    <property type="taxonomic scope" value="Eukaryota"/>
</dbReference>
<dbReference type="HOGENOM" id="CLU_654234_0_0_1"/>
<dbReference type="InParanoid" id="O45291"/>
<dbReference type="OMA" id="MERPICF"/>
<dbReference type="OrthoDB" id="7442607at2759"/>
<dbReference type="PhylomeDB" id="O45291"/>
<dbReference type="PRO" id="PR:O45291"/>
<dbReference type="Proteomes" id="UP000001940">
    <property type="component" value="Chromosome III"/>
</dbReference>
<dbReference type="Bgee" id="WBGene00006552">
    <property type="expression patterns" value="Expressed in embryo and 2 other cell types or tissues"/>
</dbReference>
<dbReference type="GO" id="GO:0000785">
    <property type="term" value="C:chromatin"/>
    <property type="evidence" value="ECO:0000318"/>
    <property type="project" value="GO_Central"/>
</dbReference>
<dbReference type="GO" id="GO:0005634">
    <property type="term" value="C:nucleus"/>
    <property type="evidence" value="ECO:0000318"/>
    <property type="project" value="GO_Central"/>
</dbReference>
<dbReference type="GO" id="GO:0000981">
    <property type="term" value="F:DNA-binding transcription factor activity, RNA polymerase II-specific"/>
    <property type="evidence" value="ECO:0000318"/>
    <property type="project" value="GO_Central"/>
</dbReference>
<dbReference type="GO" id="GO:0000978">
    <property type="term" value="F:RNA polymerase II cis-regulatory region sequence-specific DNA binding"/>
    <property type="evidence" value="ECO:0000318"/>
    <property type="project" value="GO_Central"/>
</dbReference>
<dbReference type="GO" id="GO:0001708">
    <property type="term" value="P:cell fate specification"/>
    <property type="evidence" value="ECO:0000318"/>
    <property type="project" value="GO_Central"/>
</dbReference>
<dbReference type="GO" id="GO:0045893">
    <property type="term" value="P:positive regulation of DNA-templated transcription"/>
    <property type="evidence" value="ECO:0007669"/>
    <property type="project" value="InterPro"/>
</dbReference>
<dbReference type="GO" id="GO:0006357">
    <property type="term" value="P:regulation of transcription by RNA polymerase II"/>
    <property type="evidence" value="ECO:0000318"/>
    <property type="project" value="GO_Central"/>
</dbReference>
<dbReference type="CDD" id="cd00182">
    <property type="entry name" value="T-box"/>
    <property type="match status" value="1"/>
</dbReference>
<dbReference type="FunFam" id="2.60.40.820:FF:000020">
    <property type="entry name" value="T-box transcription factor 18"/>
    <property type="match status" value="1"/>
</dbReference>
<dbReference type="Gene3D" id="2.60.40.820">
    <property type="entry name" value="Transcription factor, T-box"/>
    <property type="match status" value="1"/>
</dbReference>
<dbReference type="InterPro" id="IPR008967">
    <property type="entry name" value="p53-like_TF_DNA-bd_sf"/>
</dbReference>
<dbReference type="InterPro" id="IPR046360">
    <property type="entry name" value="T-box_DNA-bd"/>
</dbReference>
<dbReference type="InterPro" id="IPR036960">
    <property type="entry name" value="T-box_sf"/>
</dbReference>
<dbReference type="InterPro" id="IPR001699">
    <property type="entry name" value="TF_T-box"/>
</dbReference>
<dbReference type="InterPro" id="IPR018186">
    <property type="entry name" value="TF_T-box_CS"/>
</dbReference>
<dbReference type="PANTHER" id="PTHR11267:SF170">
    <property type="entry name" value="T-BOX PROTEIN 33-RELATED"/>
    <property type="match status" value="1"/>
</dbReference>
<dbReference type="PANTHER" id="PTHR11267">
    <property type="entry name" value="T-BOX PROTEIN-RELATED"/>
    <property type="match status" value="1"/>
</dbReference>
<dbReference type="Pfam" id="PF00907">
    <property type="entry name" value="T-box"/>
    <property type="match status" value="1"/>
</dbReference>
<dbReference type="PRINTS" id="PR00937">
    <property type="entry name" value="TBOX"/>
</dbReference>
<dbReference type="SMART" id="SM00425">
    <property type="entry name" value="TBOX"/>
    <property type="match status" value="1"/>
</dbReference>
<dbReference type="SUPFAM" id="SSF49417">
    <property type="entry name" value="p53-like transcription factors"/>
    <property type="match status" value="1"/>
</dbReference>
<dbReference type="PROSITE" id="PS01283">
    <property type="entry name" value="TBOX_1"/>
    <property type="match status" value="1"/>
</dbReference>
<dbReference type="PROSITE" id="PS50252">
    <property type="entry name" value="TBOX_3"/>
    <property type="match status" value="1"/>
</dbReference>
<feature type="chain" id="PRO_0000184478" description="Putative T-box protein 33">
    <location>
        <begin position="1"/>
        <end position="420"/>
    </location>
</feature>
<feature type="DNA-binding region" description="T-box" evidence="1">
    <location>
        <begin position="93"/>
        <end position="291"/>
    </location>
</feature>
<feature type="region of interest" description="Disordered" evidence="2">
    <location>
        <begin position="395"/>
        <end position="420"/>
    </location>
</feature>
<feature type="compositionally biased region" description="Polar residues" evidence="2">
    <location>
        <begin position="395"/>
        <end position="412"/>
    </location>
</feature>
<comment type="subcellular location">
    <subcellularLocation>
        <location evidence="1">Nucleus</location>
    </subcellularLocation>
</comment>
<protein>
    <recommendedName>
        <fullName>Putative T-box protein 33</fullName>
    </recommendedName>
</protein>
<name>TBX33_CAEEL</name>